<comment type="function">
    <text evidence="1">Catalyzes the ATP-dependent amidation of the two carboxylate groups at positions a and c of hydrogenobyrinate, using either L-glutamine or ammonia as the nitrogen source.</text>
</comment>
<comment type="catalytic activity">
    <reaction evidence="1">
        <text>hydrogenobyrinate + 2 L-glutamine + 2 ATP + 2 H2O = hydrogenobyrinate a,c-diamide + 2 L-glutamate + 2 ADP + 2 phosphate + 2 H(+)</text>
        <dbReference type="Rhea" id="RHEA:12544"/>
        <dbReference type="ChEBI" id="CHEBI:15377"/>
        <dbReference type="ChEBI" id="CHEBI:15378"/>
        <dbReference type="ChEBI" id="CHEBI:29985"/>
        <dbReference type="ChEBI" id="CHEBI:30616"/>
        <dbReference type="ChEBI" id="CHEBI:43474"/>
        <dbReference type="ChEBI" id="CHEBI:58359"/>
        <dbReference type="ChEBI" id="CHEBI:77873"/>
        <dbReference type="ChEBI" id="CHEBI:77874"/>
        <dbReference type="ChEBI" id="CHEBI:456216"/>
        <dbReference type="EC" id="6.3.5.9"/>
    </reaction>
</comment>
<comment type="cofactor">
    <cofactor evidence="1">
        <name>Mg(2+)</name>
        <dbReference type="ChEBI" id="CHEBI:18420"/>
    </cofactor>
</comment>
<comment type="pathway">
    <text evidence="1">Cofactor biosynthesis; adenosylcobalamin biosynthesis; cob(II)yrinate a,c-diamide from precorrin-2 (aerobic route): step 9/10.</text>
</comment>
<comment type="domain">
    <text evidence="1">Comprises of two domains. The C-terminal domain contains the binding site for glutamine and catalyzes the hydrolysis of this substrate to glutamate and ammonia. The N-terminal domain is anticipated to bind ATP and hydrogenobyrinate and catalyzes the ultimate synthesis of the diamide product. The ammonia produced via the glutaminase domain is probably translocated to the adjacent domain via a molecular tunnel, where it reacts with an activated intermediate.</text>
</comment>
<comment type="miscellaneous">
    <text evidence="1">The a and c carboxylates of hydrogenobyrinate are activated for nucleophilic attack via formation of a phosphorylated intermediate by ATP. CobB catalyzes first the amidation of the c-carboxylate, and then that of the a-carboxylate.</text>
</comment>
<comment type="similarity">
    <text evidence="1">Belongs to the CobB/CbiA family.</text>
</comment>
<keyword id="KW-0067">ATP-binding</keyword>
<keyword id="KW-0169">Cobalamin biosynthesis</keyword>
<keyword id="KW-0315">Glutamine amidotransferase</keyword>
<keyword id="KW-0436">Ligase</keyword>
<keyword id="KW-0460">Magnesium</keyword>
<keyword id="KW-0547">Nucleotide-binding</keyword>
<keyword id="KW-1185">Reference proteome</keyword>
<protein>
    <recommendedName>
        <fullName evidence="1">Hydrogenobyrinate a,c-diamide synthase</fullName>
        <ecNumber evidence="1">6.3.5.9</ecNumber>
    </recommendedName>
    <alternativeName>
        <fullName evidence="1">Hydrogenobyrinic acid a,c-diamide synthase</fullName>
    </alternativeName>
</protein>
<proteinExistence type="inferred from homology"/>
<dbReference type="EC" id="6.3.5.9" evidence="1"/>
<dbReference type="EMBL" id="AE000516">
    <property type="protein sequence ID" value="AAK47240.1"/>
    <property type="molecule type" value="Genomic_DNA"/>
</dbReference>
<dbReference type="PIR" id="C70589">
    <property type="entry name" value="C70589"/>
</dbReference>
<dbReference type="RefSeq" id="WP_003899509.1">
    <property type="nucleotide sequence ID" value="NZ_KK341227.1"/>
</dbReference>
<dbReference type="SMR" id="P9WP96"/>
<dbReference type="KEGG" id="mtc:MT2914"/>
<dbReference type="PATRIC" id="fig|83331.31.peg.3148"/>
<dbReference type="HOGENOM" id="CLU_022752_1_1_11"/>
<dbReference type="UniPathway" id="UPA00148">
    <property type="reaction ID" value="UER00220"/>
</dbReference>
<dbReference type="Proteomes" id="UP000001020">
    <property type="component" value="Chromosome"/>
</dbReference>
<dbReference type="GO" id="GO:0005524">
    <property type="term" value="F:ATP binding"/>
    <property type="evidence" value="ECO:0007669"/>
    <property type="project" value="UniProtKB-UniRule"/>
</dbReference>
<dbReference type="GO" id="GO:0042242">
    <property type="term" value="F:cobyrinic acid a,c-diamide synthase activity"/>
    <property type="evidence" value="ECO:0007669"/>
    <property type="project" value="InterPro"/>
</dbReference>
<dbReference type="GO" id="GO:0043802">
    <property type="term" value="F:hydrogenobyrinic acid a,c-diamide synthase (glutamine-hydrolysing) activity"/>
    <property type="evidence" value="ECO:0007669"/>
    <property type="project" value="UniProtKB-UniRule"/>
</dbReference>
<dbReference type="GO" id="GO:0009236">
    <property type="term" value="P:cobalamin biosynthetic process"/>
    <property type="evidence" value="ECO:0007669"/>
    <property type="project" value="UniProtKB-UniRule"/>
</dbReference>
<dbReference type="CDD" id="cd05388">
    <property type="entry name" value="CobB_N"/>
    <property type="match status" value="1"/>
</dbReference>
<dbReference type="CDD" id="cd03130">
    <property type="entry name" value="GATase1_CobB"/>
    <property type="match status" value="1"/>
</dbReference>
<dbReference type="FunFam" id="3.40.50.300:FF:002379">
    <property type="entry name" value="Hydrogenobyrinate a,c-diamide synthase"/>
    <property type="match status" value="1"/>
</dbReference>
<dbReference type="FunFam" id="3.40.50.880:FF:000098">
    <property type="entry name" value="Hydrogenobyrinate a,c-diamide synthase"/>
    <property type="match status" value="1"/>
</dbReference>
<dbReference type="Gene3D" id="3.40.50.880">
    <property type="match status" value="1"/>
</dbReference>
<dbReference type="Gene3D" id="3.40.50.300">
    <property type="entry name" value="P-loop containing nucleotide triphosphate hydrolases"/>
    <property type="match status" value="1"/>
</dbReference>
<dbReference type="HAMAP" id="MF_00027">
    <property type="entry name" value="CobB_CbiA"/>
    <property type="match status" value="1"/>
</dbReference>
<dbReference type="InterPro" id="IPR004484">
    <property type="entry name" value="CbiA/CobB_synth"/>
</dbReference>
<dbReference type="InterPro" id="IPR029062">
    <property type="entry name" value="Class_I_gatase-like"/>
</dbReference>
<dbReference type="InterPro" id="IPR002586">
    <property type="entry name" value="CobQ/CobB/MinD/ParA_Nub-bd_dom"/>
</dbReference>
<dbReference type="InterPro" id="IPR011698">
    <property type="entry name" value="GATase_3"/>
</dbReference>
<dbReference type="InterPro" id="IPR027417">
    <property type="entry name" value="P-loop_NTPase"/>
</dbReference>
<dbReference type="NCBIfam" id="TIGR00379">
    <property type="entry name" value="cobB"/>
    <property type="match status" value="1"/>
</dbReference>
<dbReference type="NCBIfam" id="NF002204">
    <property type="entry name" value="PRK01077.1"/>
    <property type="match status" value="1"/>
</dbReference>
<dbReference type="PANTHER" id="PTHR43873">
    <property type="entry name" value="COBYRINATE A,C-DIAMIDE SYNTHASE"/>
    <property type="match status" value="1"/>
</dbReference>
<dbReference type="PANTHER" id="PTHR43873:SF1">
    <property type="entry name" value="COBYRINATE A,C-DIAMIDE SYNTHASE"/>
    <property type="match status" value="1"/>
</dbReference>
<dbReference type="Pfam" id="PF01656">
    <property type="entry name" value="CbiA"/>
    <property type="match status" value="1"/>
</dbReference>
<dbReference type="Pfam" id="PF07685">
    <property type="entry name" value="GATase_3"/>
    <property type="match status" value="1"/>
</dbReference>
<dbReference type="SUPFAM" id="SSF52317">
    <property type="entry name" value="Class I glutamine amidotransferase-like"/>
    <property type="match status" value="1"/>
</dbReference>
<dbReference type="SUPFAM" id="SSF52540">
    <property type="entry name" value="P-loop containing nucleoside triphosphate hydrolases"/>
    <property type="match status" value="1"/>
</dbReference>
<dbReference type="PROSITE" id="PS51274">
    <property type="entry name" value="GATASE_COBBQ"/>
    <property type="match status" value="1"/>
</dbReference>
<reference key="1">
    <citation type="journal article" date="2002" name="J. Bacteriol.">
        <title>Whole-genome comparison of Mycobacterium tuberculosis clinical and laboratory strains.</title>
        <authorList>
            <person name="Fleischmann R.D."/>
            <person name="Alland D."/>
            <person name="Eisen J.A."/>
            <person name="Carpenter L."/>
            <person name="White O."/>
            <person name="Peterson J.D."/>
            <person name="DeBoy R.T."/>
            <person name="Dodson R.J."/>
            <person name="Gwinn M.L."/>
            <person name="Haft D.H."/>
            <person name="Hickey E.K."/>
            <person name="Kolonay J.F."/>
            <person name="Nelson W.C."/>
            <person name="Umayam L.A."/>
            <person name="Ermolaeva M.D."/>
            <person name="Salzberg S.L."/>
            <person name="Delcher A."/>
            <person name="Utterback T.R."/>
            <person name="Weidman J.F."/>
            <person name="Khouri H.M."/>
            <person name="Gill J."/>
            <person name="Mikula A."/>
            <person name="Bishai W."/>
            <person name="Jacobs W.R. Jr."/>
            <person name="Venter J.C."/>
            <person name="Fraser C.M."/>
        </authorList>
    </citation>
    <scope>NUCLEOTIDE SEQUENCE [LARGE SCALE GENOMIC DNA]</scope>
    <source>
        <strain>CDC 1551 / Oshkosh</strain>
    </source>
</reference>
<sequence length="457" mass="46958">MRVSAVAVAAPASGSGKTTIATGLIGALRQAGHTVAPFKVGPDFIDPGYHALAAGRPGRNLDPVLVGERLIGPLYAHGVAGADIAVIEGVLGLFDGRIGPAGGAPAAGSTAHVAALLGAPVILVVDARGQSHSVAALLHGFSTFDTATRIAGVILNRVGSARHEQVLRQACDQAGVAVLGAIPRTAELELPTRYLGLVTAVEYGRRARLAVQAMTAVVARHVDLAAVIACAGSQAAHPPWDPVIAVGNTARQPATVAIAAGRAFTFGYAEHAEMLRAAGAEVVEFDPLSETLPEGTDAVVLPGGFPEQFTAELSANDTVRRQINELAAAGAPVHAECAGLLYLVSELDGHPMCGVVAGSARFTQHLKLGYRDAVAVVDSALYSVGERVVGHEFHRTAVTFADSYQPAWVYQGQDVDDVRDGAVHSGVHASYLHTHPAATPGAVARFVAHAACNTPRA</sequence>
<organism>
    <name type="scientific">Mycobacterium tuberculosis (strain CDC 1551 / Oshkosh)</name>
    <dbReference type="NCBI Taxonomy" id="83331"/>
    <lineage>
        <taxon>Bacteria</taxon>
        <taxon>Bacillati</taxon>
        <taxon>Actinomycetota</taxon>
        <taxon>Actinomycetes</taxon>
        <taxon>Mycobacteriales</taxon>
        <taxon>Mycobacteriaceae</taxon>
        <taxon>Mycobacterium</taxon>
        <taxon>Mycobacterium tuberculosis complex</taxon>
    </lineage>
</organism>
<evidence type="ECO:0000255" key="1">
    <source>
        <dbReference type="HAMAP-Rule" id="MF_00027"/>
    </source>
</evidence>
<name>COBB_MYCTO</name>
<feature type="chain" id="PRO_0000426990" description="Hydrogenobyrinate a,c-diamide synthase">
    <location>
        <begin position="1"/>
        <end position="457"/>
    </location>
</feature>
<feature type="domain" description="GATase cobBQ-type" evidence="1">
    <location>
        <begin position="255"/>
        <end position="441"/>
    </location>
</feature>
<feature type="active site" description="Nucleophile" evidence="1">
    <location>
        <position position="337"/>
    </location>
</feature>
<feature type="site" description="Increases nucleophilicity of active site Cys" evidence="1">
    <location>
        <position position="433"/>
    </location>
</feature>
<accession>P9WP96</accession>
<accession>L0TCF1</accession>
<accession>O05811</accession>
<accession>P63835</accession>
<gene>
    <name evidence="1" type="primary">cobB</name>
    <name type="ordered locus">MT2914</name>
</gene>